<accession>P63076</accession>
<accession>O70627</accession>
<organism>
    <name type="scientific">Rattus norvegicus</name>
    <name type="common">Rat</name>
    <dbReference type="NCBI Taxonomy" id="10116"/>
    <lineage>
        <taxon>Eukaryota</taxon>
        <taxon>Metazoa</taxon>
        <taxon>Chordata</taxon>
        <taxon>Craniata</taxon>
        <taxon>Vertebrata</taxon>
        <taxon>Euteleostomi</taxon>
        <taxon>Mammalia</taxon>
        <taxon>Eutheria</taxon>
        <taxon>Euarchontoglires</taxon>
        <taxon>Glires</taxon>
        <taxon>Rodentia</taxon>
        <taxon>Myomorpha</taxon>
        <taxon>Muroidea</taxon>
        <taxon>Muridae</taxon>
        <taxon>Murinae</taxon>
        <taxon>Rattus</taxon>
    </lineage>
</organism>
<evidence type="ECO:0000250" key="1"/>
<evidence type="ECO:0000255" key="2"/>
<evidence type="ECO:0000256" key="3">
    <source>
        <dbReference type="SAM" id="MobiDB-lite"/>
    </source>
</evidence>
<evidence type="ECO:0000269" key="4">
    <source>
    </source>
</evidence>
<evidence type="ECO:0000305" key="5"/>
<feature type="signal peptide" evidence="2">
    <location>
        <begin position="1"/>
        <end position="22"/>
    </location>
</feature>
<feature type="chain" id="PRO_0000008987" description="Fibroblast growth factor 17">
    <location>
        <begin position="23"/>
        <end position="216"/>
    </location>
</feature>
<feature type="region of interest" description="Disordered" evidence="3">
    <location>
        <begin position="195"/>
        <end position="216"/>
    </location>
</feature>
<feature type="compositionally biased region" description="Basic residues" evidence="3">
    <location>
        <begin position="204"/>
        <end position="216"/>
    </location>
</feature>
<feature type="glycosylation site" description="N-linked (GlcNAc...) asparagine" evidence="2">
    <location>
        <position position="137"/>
    </location>
</feature>
<keyword id="KW-0217">Developmental protein</keyword>
<keyword id="KW-0325">Glycoprotein</keyword>
<keyword id="KW-0339">Growth factor</keyword>
<keyword id="KW-1185">Reference proteome</keyword>
<keyword id="KW-0964">Secreted</keyword>
<keyword id="KW-0732">Signal</keyword>
<dbReference type="EMBL" id="AB008682">
    <property type="protein sequence ID" value="BAA25426.1"/>
    <property type="molecule type" value="mRNA"/>
</dbReference>
<dbReference type="PIR" id="JC5972">
    <property type="entry name" value="JC5972"/>
</dbReference>
<dbReference type="RefSeq" id="NP_062071.1">
    <property type="nucleotide sequence ID" value="NM_019198.2"/>
</dbReference>
<dbReference type="SMR" id="P63076"/>
<dbReference type="FunCoup" id="P63076">
    <property type="interactions" value="426"/>
</dbReference>
<dbReference type="STRING" id="10116.ENSRNOP00000017723"/>
<dbReference type="GlyCosmos" id="P63076">
    <property type="glycosylation" value="1 site, No reported glycans"/>
</dbReference>
<dbReference type="GlyGen" id="P63076">
    <property type="glycosylation" value="1 site"/>
</dbReference>
<dbReference type="PhosphoSitePlus" id="P63076"/>
<dbReference type="PaxDb" id="10116-ENSRNOP00000017723"/>
<dbReference type="Ensembl" id="ENSRNOT00000017723.3">
    <property type="protein sequence ID" value="ENSRNOP00000017723.1"/>
    <property type="gene ID" value="ENSRNOG00000012912.3"/>
</dbReference>
<dbReference type="GeneID" id="29368"/>
<dbReference type="KEGG" id="rno:29368"/>
<dbReference type="UCSC" id="RGD:2607">
    <property type="organism name" value="rat"/>
</dbReference>
<dbReference type="AGR" id="RGD:2607"/>
<dbReference type="CTD" id="8822"/>
<dbReference type="RGD" id="2607">
    <property type="gene designation" value="Fgf17"/>
</dbReference>
<dbReference type="eggNOG" id="KOG3885">
    <property type="taxonomic scope" value="Eukaryota"/>
</dbReference>
<dbReference type="GeneTree" id="ENSGT00940000161965"/>
<dbReference type="HOGENOM" id="CLU_090682_0_0_1"/>
<dbReference type="InParanoid" id="P63076"/>
<dbReference type="OMA" id="LCCQTQV"/>
<dbReference type="PhylomeDB" id="P63076"/>
<dbReference type="TreeFam" id="TF331233"/>
<dbReference type="Reactome" id="R-RNO-109704">
    <property type="pathway name" value="PI3K Cascade"/>
</dbReference>
<dbReference type="Reactome" id="R-RNO-1257604">
    <property type="pathway name" value="PIP3 activates AKT signaling"/>
</dbReference>
<dbReference type="Reactome" id="R-RNO-190322">
    <property type="pathway name" value="FGFR4 ligand binding and activation"/>
</dbReference>
<dbReference type="Reactome" id="R-RNO-190371">
    <property type="pathway name" value="FGFR3b ligand binding and activation"/>
</dbReference>
<dbReference type="Reactome" id="R-RNO-190372">
    <property type="pathway name" value="FGFR3c ligand binding and activation"/>
</dbReference>
<dbReference type="Reactome" id="R-RNO-190373">
    <property type="pathway name" value="FGFR1c ligand binding and activation"/>
</dbReference>
<dbReference type="Reactome" id="R-RNO-190375">
    <property type="pathway name" value="FGFR2c ligand binding and activation"/>
</dbReference>
<dbReference type="Reactome" id="R-RNO-5654219">
    <property type="pathway name" value="Phospholipase C-mediated cascade: FGFR1"/>
</dbReference>
<dbReference type="Reactome" id="R-RNO-5654221">
    <property type="pathway name" value="Phospholipase C-mediated cascade, FGFR2"/>
</dbReference>
<dbReference type="Reactome" id="R-RNO-5654227">
    <property type="pathway name" value="Phospholipase C-mediated cascade, FGFR3"/>
</dbReference>
<dbReference type="Reactome" id="R-RNO-5654228">
    <property type="pathway name" value="Phospholipase C-mediated cascade, FGFR4"/>
</dbReference>
<dbReference type="Reactome" id="R-RNO-5654687">
    <property type="pathway name" value="Downstream signaling of activated FGFR1"/>
</dbReference>
<dbReference type="Reactome" id="R-RNO-5654688">
    <property type="pathway name" value="SHC-mediated cascade:FGFR1"/>
</dbReference>
<dbReference type="Reactome" id="R-RNO-5654689">
    <property type="pathway name" value="PI-3K cascade:FGFR1"/>
</dbReference>
<dbReference type="Reactome" id="R-RNO-5654693">
    <property type="pathway name" value="FRS-mediated FGFR1 signaling"/>
</dbReference>
<dbReference type="Reactome" id="R-RNO-5654695">
    <property type="pathway name" value="PI-3K cascade:FGFR2"/>
</dbReference>
<dbReference type="Reactome" id="R-RNO-5654699">
    <property type="pathway name" value="SHC-mediated cascade:FGFR2"/>
</dbReference>
<dbReference type="Reactome" id="R-RNO-5654700">
    <property type="pathway name" value="FRS-mediated FGFR2 signaling"/>
</dbReference>
<dbReference type="Reactome" id="R-RNO-5654704">
    <property type="pathway name" value="SHC-mediated cascade:FGFR3"/>
</dbReference>
<dbReference type="Reactome" id="R-RNO-5654706">
    <property type="pathway name" value="FRS-mediated FGFR3 signaling"/>
</dbReference>
<dbReference type="Reactome" id="R-RNO-5654710">
    <property type="pathway name" value="PI-3K cascade:FGFR3"/>
</dbReference>
<dbReference type="Reactome" id="R-RNO-5654712">
    <property type="pathway name" value="FRS-mediated FGFR4 signaling"/>
</dbReference>
<dbReference type="Reactome" id="R-RNO-5654719">
    <property type="pathway name" value="SHC-mediated cascade:FGFR4"/>
</dbReference>
<dbReference type="Reactome" id="R-RNO-5654720">
    <property type="pathway name" value="PI-3K cascade:FGFR4"/>
</dbReference>
<dbReference type="Reactome" id="R-RNO-5654726">
    <property type="pathway name" value="Negative regulation of FGFR1 signaling"/>
</dbReference>
<dbReference type="Reactome" id="R-RNO-5654727">
    <property type="pathway name" value="Negative regulation of FGFR2 signaling"/>
</dbReference>
<dbReference type="Reactome" id="R-RNO-5654732">
    <property type="pathway name" value="Negative regulation of FGFR3 signaling"/>
</dbReference>
<dbReference type="Reactome" id="R-RNO-5654733">
    <property type="pathway name" value="Negative regulation of FGFR4 signaling"/>
</dbReference>
<dbReference type="Reactome" id="R-RNO-5658623">
    <property type="pathway name" value="FGFRL1 modulation of FGFR1 signaling"/>
</dbReference>
<dbReference type="Reactome" id="R-RNO-5673001">
    <property type="pathway name" value="RAF/MAP kinase cascade"/>
</dbReference>
<dbReference type="Reactome" id="R-RNO-6811558">
    <property type="pathway name" value="PI5P, PP2A and IER3 Regulate PI3K/AKT Signaling"/>
</dbReference>
<dbReference type="PRO" id="PR:P63076"/>
<dbReference type="Proteomes" id="UP000002494">
    <property type="component" value="Chromosome 15"/>
</dbReference>
<dbReference type="GO" id="GO:0005737">
    <property type="term" value="C:cytoplasm"/>
    <property type="evidence" value="ECO:0000318"/>
    <property type="project" value="GO_Central"/>
</dbReference>
<dbReference type="GO" id="GO:0005615">
    <property type="term" value="C:extracellular space"/>
    <property type="evidence" value="ECO:0000318"/>
    <property type="project" value="GO_Central"/>
</dbReference>
<dbReference type="GO" id="GO:0008083">
    <property type="term" value="F:growth factor activity"/>
    <property type="evidence" value="ECO:0000318"/>
    <property type="project" value="GO_Central"/>
</dbReference>
<dbReference type="GO" id="GO:0005105">
    <property type="term" value="F:type 1 fibroblast growth factor receptor binding"/>
    <property type="evidence" value="ECO:0000266"/>
    <property type="project" value="RGD"/>
</dbReference>
<dbReference type="GO" id="GO:0005111">
    <property type="term" value="F:type 2 fibroblast growth factor receptor binding"/>
    <property type="evidence" value="ECO:0000266"/>
    <property type="project" value="RGD"/>
</dbReference>
<dbReference type="GO" id="GO:0008543">
    <property type="term" value="P:fibroblast growth factor receptor signaling pathway"/>
    <property type="evidence" value="ECO:0000266"/>
    <property type="project" value="RGD"/>
</dbReference>
<dbReference type="GO" id="GO:0022008">
    <property type="term" value="P:neurogenesis"/>
    <property type="evidence" value="ECO:0000318"/>
    <property type="project" value="GO_Central"/>
</dbReference>
<dbReference type="GO" id="GO:0008284">
    <property type="term" value="P:positive regulation of cell population proliferation"/>
    <property type="evidence" value="ECO:0000266"/>
    <property type="project" value="RGD"/>
</dbReference>
<dbReference type="GO" id="GO:0043410">
    <property type="term" value="P:positive regulation of MAPK cascade"/>
    <property type="evidence" value="ECO:0000318"/>
    <property type="project" value="GO_Central"/>
</dbReference>
<dbReference type="GO" id="GO:0030334">
    <property type="term" value="P:regulation of cell migration"/>
    <property type="evidence" value="ECO:0000318"/>
    <property type="project" value="GO_Central"/>
</dbReference>
<dbReference type="CDD" id="cd23323">
    <property type="entry name" value="beta-trefoil_FGF17"/>
    <property type="match status" value="1"/>
</dbReference>
<dbReference type="FunFam" id="2.80.10.50:FF:000007">
    <property type="entry name" value="Fibroblast growth factor"/>
    <property type="match status" value="1"/>
</dbReference>
<dbReference type="Gene3D" id="2.80.10.50">
    <property type="match status" value="1"/>
</dbReference>
<dbReference type="InterPro" id="IPR002209">
    <property type="entry name" value="Fibroblast_GF_fam"/>
</dbReference>
<dbReference type="InterPro" id="IPR008996">
    <property type="entry name" value="IL1/FGF"/>
</dbReference>
<dbReference type="PANTHER" id="PTHR11486">
    <property type="entry name" value="FIBROBLAST GROWTH FACTOR"/>
    <property type="match status" value="1"/>
</dbReference>
<dbReference type="Pfam" id="PF00167">
    <property type="entry name" value="FGF"/>
    <property type="match status" value="1"/>
</dbReference>
<dbReference type="PRINTS" id="PR00262">
    <property type="entry name" value="IL1HBGF"/>
</dbReference>
<dbReference type="SMART" id="SM00442">
    <property type="entry name" value="FGF"/>
    <property type="match status" value="1"/>
</dbReference>
<dbReference type="SUPFAM" id="SSF50353">
    <property type="entry name" value="Cytokine"/>
    <property type="match status" value="1"/>
</dbReference>
<dbReference type="PROSITE" id="PS00247">
    <property type="entry name" value="HBGF_FGF"/>
    <property type="match status" value="1"/>
</dbReference>
<gene>
    <name type="primary">Fgf17</name>
</gene>
<reference key="1">
    <citation type="journal article" date="1998" name="Biochem. Biophys. Res. Commun.">
        <title>Structure and expression of a novel fibroblast growth factor, FGF-17, preferentially expressed in the embryonic brain.</title>
        <authorList>
            <person name="Hoshikawa M."/>
            <person name="Ohbayashi N."/>
            <person name="Yonamine A."/>
            <person name="Konishi M."/>
            <person name="Ozaki K."/>
            <person name="Fukui S."/>
            <person name="Itoh N."/>
        </authorList>
    </citation>
    <scope>NUCLEOTIDE SEQUENCE [MRNA]</scope>
    <scope>SUBCELLULAR LOCATION</scope>
    <scope>TISSUE SPECIFICITY</scope>
    <scope>DEVELOPMENTAL STAGE</scope>
    <source>
        <strain>Wistar</strain>
        <tissue>Embryo</tissue>
    </source>
</reference>
<sequence length="216" mass="24924">MGAARLLPNLTLCLQLLILCCQTQGENHPSPNFNQYVRDQGAMTDQLSRRQIREYQLYSRTSGKHVQVTGRRISATAEDGNKFAKLIVETDTFGSRVRIKGAESEKYICMNKRGKLIGKPSGKSKDCVFTEIVLENNYTAFQNARHEGWFMAFTRQGRPRQASRSRQNQREAHFIKRLYQGQLPFPNHAERQKQFEFVGSAPTRRTKRTRRPQSQT</sequence>
<name>FGF17_RAT</name>
<protein>
    <recommendedName>
        <fullName>Fibroblast growth factor 17</fullName>
        <shortName>FGF-17</shortName>
    </recommendedName>
</protein>
<proteinExistence type="evidence at transcript level"/>
<comment type="function">
    <text>Plays an important role in the regulation of embryonic development and as signaling molecule in the induction and patterning of the embryonic brain. Required for normal brain development.</text>
</comment>
<comment type="subunit">
    <text evidence="1">Interacts with FGFR3 and FGFR4.</text>
</comment>
<comment type="subcellular location">
    <subcellularLocation>
        <location evidence="4">Secreted</location>
    </subcellularLocation>
</comment>
<comment type="tissue specificity">
    <text evidence="4">Expressed in embryonic brain, mostly in the isthmus cerebellar neuroepithelium and septum neuroepithelium, and in all adult tissues.</text>
</comment>
<comment type="developmental stage">
    <text evidence="4">Expressed at high level in the brain embryo at 14.5 dpc. Expressed at lower level in the brain embryo at 10.5 dpc and 19.5 dpc.</text>
</comment>
<comment type="similarity">
    <text evidence="5">Belongs to the heparin-binding growth factors family.</text>
</comment>